<sequence>MNQDQLKQAVAQAAVDHILPHLDSKSIVGVGTGSTANFFIDALARHKAEFDGAVASSEATAKRLKEHGIPVYELNTVSELEFYVDGADESNERLELIKGGGAALTREKIVAAVAKTFICIADASKLVPILGQFPLPVEVIPMARSHVARQLVKLGGDPVYREGVLTDNGNIILDVHNLRIDSPVELEEKINAIVGVVTNGLFAARPADLLLLGTADGVKTLKA</sequence>
<dbReference type="EC" id="5.3.1.6" evidence="1"/>
<dbReference type="EMBL" id="CP000438">
    <property type="protein sequence ID" value="ABJ15293.1"/>
    <property type="molecule type" value="Genomic_DNA"/>
</dbReference>
<dbReference type="RefSeq" id="WP_003084386.1">
    <property type="nucleotide sequence ID" value="NZ_CP034244.1"/>
</dbReference>
<dbReference type="SMR" id="Q02U86"/>
<dbReference type="KEGG" id="pau:PA14_04310"/>
<dbReference type="PseudoCAP" id="PA14_04310"/>
<dbReference type="HOGENOM" id="CLU_056590_1_1_6"/>
<dbReference type="BioCyc" id="PAER208963:G1G74-361-MONOMER"/>
<dbReference type="UniPathway" id="UPA00115">
    <property type="reaction ID" value="UER00412"/>
</dbReference>
<dbReference type="Proteomes" id="UP000000653">
    <property type="component" value="Chromosome"/>
</dbReference>
<dbReference type="GO" id="GO:0005829">
    <property type="term" value="C:cytosol"/>
    <property type="evidence" value="ECO:0007669"/>
    <property type="project" value="TreeGrafter"/>
</dbReference>
<dbReference type="GO" id="GO:0004751">
    <property type="term" value="F:ribose-5-phosphate isomerase activity"/>
    <property type="evidence" value="ECO:0007669"/>
    <property type="project" value="UniProtKB-UniRule"/>
</dbReference>
<dbReference type="GO" id="GO:0006014">
    <property type="term" value="P:D-ribose metabolic process"/>
    <property type="evidence" value="ECO:0007669"/>
    <property type="project" value="TreeGrafter"/>
</dbReference>
<dbReference type="GO" id="GO:0009052">
    <property type="term" value="P:pentose-phosphate shunt, non-oxidative branch"/>
    <property type="evidence" value="ECO:0007669"/>
    <property type="project" value="UniProtKB-UniRule"/>
</dbReference>
<dbReference type="CDD" id="cd01398">
    <property type="entry name" value="RPI_A"/>
    <property type="match status" value="1"/>
</dbReference>
<dbReference type="FunFam" id="3.30.70.260:FF:000004">
    <property type="entry name" value="Ribose-5-phosphate isomerase A"/>
    <property type="match status" value="1"/>
</dbReference>
<dbReference type="FunFam" id="3.40.50.1360:FF:000001">
    <property type="entry name" value="Ribose-5-phosphate isomerase A"/>
    <property type="match status" value="1"/>
</dbReference>
<dbReference type="Gene3D" id="3.30.70.260">
    <property type="match status" value="1"/>
</dbReference>
<dbReference type="Gene3D" id="3.40.50.1360">
    <property type="match status" value="1"/>
</dbReference>
<dbReference type="HAMAP" id="MF_00170">
    <property type="entry name" value="Rib_5P_isom_A"/>
    <property type="match status" value="1"/>
</dbReference>
<dbReference type="InterPro" id="IPR037171">
    <property type="entry name" value="NagB/RpiA_transferase-like"/>
</dbReference>
<dbReference type="InterPro" id="IPR020672">
    <property type="entry name" value="Ribose5P_isomerase_typA_subgr"/>
</dbReference>
<dbReference type="InterPro" id="IPR004788">
    <property type="entry name" value="Ribose5P_isomerase_type_A"/>
</dbReference>
<dbReference type="NCBIfam" id="NF001924">
    <property type="entry name" value="PRK00702.1"/>
    <property type="match status" value="1"/>
</dbReference>
<dbReference type="NCBIfam" id="TIGR00021">
    <property type="entry name" value="rpiA"/>
    <property type="match status" value="1"/>
</dbReference>
<dbReference type="PANTHER" id="PTHR11934">
    <property type="entry name" value="RIBOSE-5-PHOSPHATE ISOMERASE"/>
    <property type="match status" value="1"/>
</dbReference>
<dbReference type="PANTHER" id="PTHR11934:SF0">
    <property type="entry name" value="RIBOSE-5-PHOSPHATE ISOMERASE"/>
    <property type="match status" value="1"/>
</dbReference>
<dbReference type="Pfam" id="PF06026">
    <property type="entry name" value="Rib_5-P_isom_A"/>
    <property type="match status" value="1"/>
</dbReference>
<dbReference type="SUPFAM" id="SSF75445">
    <property type="entry name" value="D-ribose-5-phosphate isomerase (RpiA), lid domain"/>
    <property type="match status" value="1"/>
</dbReference>
<dbReference type="SUPFAM" id="SSF100950">
    <property type="entry name" value="NagB/RpiA/CoA transferase-like"/>
    <property type="match status" value="1"/>
</dbReference>
<organism>
    <name type="scientific">Pseudomonas aeruginosa (strain UCBPP-PA14)</name>
    <dbReference type="NCBI Taxonomy" id="208963"/>
    <lineage>
        <taxon>Bacteria</taxon>
        <taxon>Pseudomonadati</taxon>
        <taxon>Pseudomonadota</taxon>
        <taxon>Gammaproteobacteria</taxon>
        <taxon>Pseudomonadales</taxon>
        <taxon>Pseudomonadaceae</taxon>
        <taxon>Pseudomonas</taxon>
    </lineage>
</organism>
<name>RPIA_PSEAB</name>
<proteinExistence type="inferred from homology"/>
<accession>Q02U86</accession>
<feature type="chain" id="PRO_1000016963" description="Ribose-5-phosphate isomerase A">
    <location>
        <begin position="1"/>
        <end position="223"/>
    </location>
</feature>
<feature type="active site" description="Proton acceptor" evidence="1">
    <location>
        <position position="107"/>
    </location>
</feature>
<feature type="binding site" evidence="1">
    <location>
        <begin position="32"/>
        <end position="35"/>
    </location>
    <ligand>
        <name>substrate</name>
    </ligand>
</feature>
<feature type="binding site" evidence="1">
    <location>
        <begin position="85"/>
        <end position="88"/>
    </location>
    <ligand>
        <name>substrate</name>
    </ligand>
</feature>
<feature type="binding site" evidence="1">
    <location>
        <begin position="98"/>
        <end position="101"/>
    </location>
    <ligand>
        <name>substrate</name>
    </ligand>
</feature>
<feature type="binding site" evidence="1">
    <location>
        <position position="125"/>
    </location>
    <ligand>
        <name>substrate</name>
    </ligand>
</feature>
<comment type="function">
    <text evidence="1">Catalyzes the reversible conversion of ribose-5-phosphate to ribulose 5-phosphate.</text>
</comment>
<comment type="catalytic activity">
    <reaction evidence="1">
        <text>aldehydo-D-ribose 5-phosphate = D-ribulose 5-phosphate</text>
        <dbReference type="Rhea" id="RHEA:14657"/>
        <dbReference type="ChEBI" id="CHEBI:58121"/>
        <dbReference type="ChEBI" id="CHEBI:58273"/>
        <dbReference type="EC" id="5.3.1.6"/>
    </reaction>
</comment>
<comment type="pathway">
    <text evidence="1">Carbohydrate degradation; pentose phosphate pathway; D-ribose 5-phosphate from D-ribulose 5-phosphate (non-oxidative stage): step 1/1.</text>
</comment>
<comment type="subunit">
    <text evidence="1">Homodimer.</text>
</comment>
<comment type="similarity">
    <text evidence="1">Belongs to the ribose 5-phosphate isomerase family.</text>
</comment>
<reference key="1">
    <citation type="journal article" date="2006" name="Genome Biol.">
        <title>Genomic analysis reveals that Pseudomonas aeruginosa virulence is combinatorial.</title>
        <authorList>
            <person name="Lee D.G."/>
            <person name="Urbach J.M."/>
            <person name="Wu G."/>
            <person name="Liberati N.T."/>
            <person name="Feinbaum R.L."/>
            <person name="Miyata S."/>
            <person name="Diggins L.T."/>
            <person name="He J."/>
            <person name="Saucier M."/>
            <person name="Deziel E."/>
            <person name="Friedman L."/>
            <person name="Li L."/>
            <person name="Grills G."/>
            <person name="Montgomery K."/>
            <person name="Kucherlapati R."/>
            <person name="Rahme L.G."/>
            <person name="Ausubel F.M."/>
        </authorList>
    </citation>
    <scope>NUCLEOTIDE SEQUENCE [LARGE SCALE GENOMIC DNA]</scope>
    <source>
        <strain>UCBPP-PA14</strain>
    </source>
</reference>
<protein>
    <recommendedName>
        <fullName evidence="1">Ribose-5-phosphate isomerase A</fullName>
        <ecNumber evidence="1">5.3.1.6</ecNumber>
    </recommendedName>
    <alternativeName>
        <fullName evidence="1">Phosphoriboisomerase A</fullName>
        <shortName evidence="1">PRI</shortName>
    </alternativeName>
</protein>
<gene>
    <name evidence="1" type="primary">rpiA</name>
    <name type="ordered locus">PA14_04310</name>
</gene>
<evidence type="ECO:0000255" key="1">
    <source>
        <dbReference type="HAMAP-Rule" id="MF_00170"/>
    </source>
</evidence>
<keyword id="KW-0413">Isomerase</keyword>